<dbReference type="EC" id="3.6.4.13" evidence="1"/>
<dbReference type="EMBL" id="AF020432">
    <property type="protein sequence ID" value="AAB71410.1"/>
    <property type="molecule type" value="mRNA"/>
</dbReference>
<dbReference type="RefSeq" id="NP_001084200.1">
    <property type="nucleotide sequence ID" value="NM_001090731.1"/>
</dbReference>
<dbReference type="SMR" id="O42226"/>
<dbReference type="BioGRID" id="100687">
    <property type="interactions" value="2"/>
</dbReference>
<dbReference type="GeneID" id="399362"/>
<dbReference type="KEGG" id="xla:399362"/>
<dbReference type="AGR" id="Xenbase:XB-GENE-5773753"/>
<dbReference type="CTD" id="399362"/>
<dbReference type="OrthoDB" id="10265785at2759"/>
<dbReference type="Proteomes" id="UP000186698">
    <property type="component" value="Chromosome 5S"/>
</dbReference>
<dbReference type="Bgee" id="399362">
    <property type="expression patterns" value="Expressed in blastula and 19 other cell types or tissues"/>
</dbReference>
<dbReference type="GO" id="GO:0071013">
    <property type="term" value="C:catalytic step 2 spliceosome"/>
    <property type="evidence" value="ECO:0000318"/>
    <property type="project" value="GO_Central"/>
</dbReference>
<dbReference type="GO" id="GO:0005737">
    <property type="term" value="C:cytoplasm"/>
    <property type="evidence" value="ECO:0007669"/>
    <property type="project" value="UniProtKB-SubCell"/>
</dbReference>
<dbReference type="GO" id="GO:0016607">
    <property type="term" value="C:nuclear speck"/>
    <property type="evidence" value="ECO:0007669"/>
    <property type="project" value="UniProtKB-SubCell"/>
</dbReference>
<dbReference type="GO" id="GO:0005730">
    <property type="term" value="C:nucleolus"/>
    <property type="evidence" value="ECO:0000318"/>
    <property type="project" value="GO_Central"/>
</dbReference>
<dbReference type="GO" id="GO:0005524">
    <property type="term" value="F:ATP binding"/>
    <property type="evidence" value="ECO:0007669"/>
    <property type="project" value="UniProtKB-KW"/>
</dbReference>
<dbReference type="GO" id="GO:0016887">
    <property type="term" value="F:ATP hydrolysis activity"/>
    <property type="evidence" value="ECO:0007669"/>
    <property type="project" value="RHEA"/>
</dbReference>
<dbReference type="GO" id="GO:0003729">
    <property type="term" value="F:mRNA binding"/>
    <property type="evidence" value="ECO:0000318"/>
    <property type="project" value="GO_Central"/>
</dbReference>
<dbReference type="GO" id="GO:0003724">
    <property type="term" value="F:RNA helicase activity"/>
    <property type="evidence" value="ECO:0000318"/>
    <property type="project" value="GO_Central"/>
</dbReference>
<dbReference type="GO" id="GO:0000398">
    <property type="term" value="P:mRNA splicing, via spliceosome"/>
    <property type="evidence" value="ECO:0000318"/>
    <property type="project" value="GO_Central"/>
</dbReference>
<dbReference type="GO" id="GO:0051028">
    <property type="term" value="P:mRNA transport"/>
    <property type="evidence" value="ECO:0007669"/>
    <property type="project" value="UniProtKB-KW"/>
</dbReference>
<dbReference type="GO" id="GO:0000184">
    <property type="term" value="P:nuclear-transcribed mRNA catabolic process, nonsense-mediated decay"/>
    <property type="evidence" value="ECO:0007669"/>
    <property type="project" value="UniProtKB-KW"/>
</dbReference>
<dbReference type="GO" id="GO:0000381">
    <property type="term" value="P:regulation of alternative mRNA splicing, via spliceosome"/>
    <property type="evidence" value="ECO:0000250"/>
    <property type="project" value="UniProtKB"/>
</dbReference>
<dbReference type="GO" id="GO:0006417">
    <property type="term" value="P:regulation of translation"/>
    <property type="evidence" value="ECO:0007669"/>
    <property type="project" value="UniProtKB-KW"/>
</dbReference>
<dbReference type="CDD" id="cd18045">
    <property type="entry name" value="DEADc_EIF4AIII_DDX48"/>
    <property type="match status" value="1"/>
</dbReference>
<dbReference type="CDD" id="cd18787">
    <property type="entry name" value="SF2_C_DEAD"/>
    <property type="match status" value="1"/>
</dbReference>
<dbReference type="FunFam" id="3.40.50.300:FF:000031">
    <property type="entry name" value="Eukaryotic initiation factor 4A-III"/>
    <property type="match status" value="1"/>
</dbReference>
<dbReference type="FunFam" id="3.40.50.300:FF:000498">
    <property type="entry name" value="Eukaryotic initiation factor 4A-III"/>
    <property type="match status" value="1"/>
</dbReference>
<dbReference type="Gene3D" id="3.40.50.300">
    <property type="entry name" value="P-loop containing nucleotide triphosphate hydrolases"/>
    <property type="match status" value="2"/>
</dbReference>
<dbReference type="InterPro" id="IPR011545">
    <property type="entry name" value="DEAD/DEAH_box_helicase_dom"/>
</dbReference>
<dbReference type="InterPro" id="IPR014001">
    <property type="entry name" value="Helicase_ATP-bd"/>
</dbReference>
<dbReference type="InterPro" id="IPR001650">
    <property type="entry name" value="Helicase_C-like"/>
</dbReference>
<dbReference type="InterPro" id="IPR027417">
    <property type="entry name" value="P-loop_NTPase"/>
</dbReference>
<dbReference type="InterPro" id="IPR000629">
    <property type="entry name" value="RNA-helicase_DEAD-box_CS"/>
</dbReference>
<dbReference type="InterPro" id="IPR014014">
    <property type="entry name" value="RNA_helicase_DEAD_Q_motif"/>
</dbReference>
<dbReference type="PANTHER" id="PTHR47958">
    <property type="entry name" value="ATP-DEPENDENT RNA HELICASE DBP3"/>
    <property type="match status" value="1"/>
</dbReference>
<dbReference type="Pfam" id="PF00270">
    <property type="entry name" value="DEAD"/>
    <property type="match status" value="1"/>
</dbReference>
<dbReference type="Pfam" id="PF00271">
    <property type="entry name" value="Helicase_C"/>
    <property type="match status" value="1"/>
</dbReference>
<dbReference type="SMART" id="SM00487">
    <property type="entry name" value="DEXDc"/>
    <property type="match status" value="1"/>
</dbReference>
<dbReference type="SMART" id="SM00490">
    <property type="entry name" value="HELICc"/>
    <property type="match status" value="1"/>
</dbReference>
<dbReference type="SUPFAM" id="SSF52540">
    <property type="entry name" value="P-loop containing nucleoside triphosphate hydrolases"/>
    <property type="match status" value="1"/>
</dbReference>
<dbReference type="PROSITE" id="PS00039">
    <property type="entry name" value="DEAD_ATP_HELICASE"/>
    <property type="match status" value="1"/>
</dbReference>
<dbReference type="PROSITE" id="PS51192">
    <property type="entry name" value="HELICASE_ATP_BIND_1"/>
    <property type="match status" value="1"/>
</dbReference>
<dbReference type="PROSITE" id="PS51194">
    <property type="entry name" value="HELICASE_CTER"/>
    <property type="match status" value="1"/>
</dbReference>
<dbReference type="PROSITE" id="PS51195">
    <property type="entry name" value="Q_MOTIF"/>
    <property type="match status" value="1"/>
</dbReference>
<keyword id="KW-0067">ATP-binding</keyword>
<keyword id="KW-0963">Cytoplasm</keyword>
<keyword id="KW-0347">Helicase</keyword>
<keyword id="KW-0378">Hydrolase</keyword>
<keyword id="KW-0507">mRNA processing</keyword>
<keyword id="KW-0508">mRNA splicing</keyword>
<keyword id="KW-0509">mRNA transport</keyword>
<keyword id="KW-0866">Nonsense-mediated mRNA decay</keyword>
<keyword id="KW-0547">Nucleotide-binding</keyword>
<keyword id="KW-0539">Nucleus</keyword>
<keyword id="KW-1185">Reference proteome</keyword>
<keyword id="KW-0694">RNA-binding</keyword>
<keyword id="KW-0747">Spliceosome</keyword>
<keyword id="KW-0810">Translation regulation</keyword>
<keyword id="KW-0813">Transport</keyword>
<sequence length="414" mass="47060">MAAAAVAGVAGLTTAHAKRLLREEDMTTVEFQTSEEVDVTPTFDTMGLREDLLRGIYAYGFEKPSAIQQKAIKQIIKGRDVIAQSQSGTGKTATFCVSVLQCLDIQIRETQALILAPTKELARQIQKVLLALGDYMNVQCHACIGGTNVGEDIRKLDYGQHVVAGTPGRVFDMIRRRSLRTRAIKMLVLDEADEMLNKGFKEQIYDVYRYLPPATQVCLISATLPHEILEMTNKFMTDPIRILVKRDELTLEGIKQFFVAVEREEWKFDTLCDLYDTLTITQAVIFCNTKRKVDWLTEKMREANFTVSSMHGDMPQKERESIMKEFRSGASRVLISTDVWARGLDVPQVSLIINYDLPNNRELYIHRIGRSGRYGRKGVAINFVKNDDIRILRDIEQYYSTQIDEMPMNVADLI</sequence>
<accession>O42226</accession>
<protein>
    <recommendedName>
        <fullName>Eukaryotic initiation factor 4A-III-B</fullName>
        <shortName>XeIF-4AIII</shortName>
        <shortName>eIF-4A-III-B</shortName>
        <shortName>eIF4A-III-B</shortName>
        <ecNumber evidence="1">3.6.4.13</ecNumber>
    </recommendedName>
    <alternativeName>
        <fullName>ATP-dependent RNA helicase DDX48-B</fullName>
    </alternativeName>
    <alternativeName>
        <fullName>ATP-dependent RNA helicase eIF4A-3-B</fullName>
    </alternativeName>
    <alternativeName>
        <fullName>DEAD box protein 48-B</fullName>
    </alternativeName>
    <alternativeName>
        <fullName>Eukaryotic translation initiation factor 4A isoform 3-B</fullName>
    </alternativeName>
</protein>
<evidence type="ECO:0000250" key="1">
    <source>
        <dbReference type="UniProtKB" id="P38919"/>
    </source>
</evidence>
<evidence type="ECO:0000250" key="2">
    <source>
        <dbReference type="UniProtKB" id="Q3B8Q2"/>
    </source>
</evidence>
<evidence type="ECO:0000255" key="3">
    <source>
        <dbReference type="PROSITE-ProRule" id="PRU00541"/>
    </source>
</evidence>
<evidence type="ECO:0000255" key="4">
    <source>
        <dbReference type="PROSITE-ProRule" id="PRU00542"/>
    </source>
</evidence>
<evidence type="ECO:0000269" key="5">
    <source>
    </source>
</evidence>
<evidence type="ECO:0000305" key="6"/>
<proteinExistence type="evidence at transcript level"/>
<comment type="function">
    <text evidence="1 5">ATP-dependent RNA helicase. Involved in pre-mRNA splicing as component of the spliceosome. Core component of the splicing-dependent multiprotein exon junction complex (EJC) deposited at splice junctions on mRNAs. The EJC is a dynamic structure consisting of core proteins and several peripheral nuclear and cytoplasmic associated factors that join the complex only transiently either during EJC assembly or during subsequent mRNA metabolism. The EJC marks the position of the exon-exon junction in the mature mRNA for the gene expression machinery and the core components remain bound to spliced mRNAs throughout all stages of mRNA metabolism thereby influencing downstream processes including nuclear mRNA export, subcellular mRNA localization, translation efficiency and nonsense-mediated mRNA decay (NMD). Binds spliced mRNA in sequence-independent manner, 20-24 nucleotides upstream of mRNA exon-exon junctions (By similarity). Involved in craniofacial development (By similarity). When overexpressed, induces epidermis in dissociated cells that would otherwise adopt a neural fate, a process that requires an active BMP signaling pathway (PubMed:9334272).</text>
</comment>
<comment type="catalytic activity">
    <reaction evidence="1">
        <text>ATP + H2O = ADP + phosphate + H(+)</text>
        <dbReference type="Rhea" id="RHEA:13065"/>
        <dbReference type="ChEBI" id="CHEBI:15377"/>
        <dbReference type="ChEBI" id="CHEBI:15378"/>
        <dbReference type="ChEBI" id="CHEBI:30616"/>
        <dbReference type="ChEBI" id="CHEBI:43474"/>
        <dbReference type="ChEBI" id="CHEBI:456216"/>
        <dbReference type="EC" id="3.6.4.13"/>
    </reaction>
</comment>
<comment type="subunit">
    <text evidence="1">Identified in the spliceosome C complex. Part of the mRNA splicing-dependent exon junction complex (EJC) complex; the core complex contains casc3, eif4a3, magoh and rbm8a.</text>
</comment>
<comment type="subcellular location">
    <subcellularLocation>
        <location evidence="2">Nucleus</location>
    </subcellularLocation>
    <subcellularLocation>
        <location evidence="1">Nucleus speckle</location>
    </subcellularLocation>
    <subcellularLocation>
        <location evidence="2">Cytoplasm</location>
    </subcellularLocation>
    <text evidence="2">Nucleocytoplasmic shuttling protein. Travels to the cytoplasm as part of the exon junction complex (EJC) bound to mRNA.</text>
</comment>
<comment type="developmental stage">
    <text evidence="5">Expressed between blastula and neural plate stages. Detected in the ventral ectoderm of the gastrula, the region fated to give rise to epidermis and a site of active BMP signaling.</text>
</comment>
<comment type="similarity">
    <text evidence="6">Belongs to the DEAD box helicase family.</text>
</comment>
<name>I4A3B_XENLA</name>
<reference key="1">
    <citation type="journal article" date="1997" name="Development">
        <title>Epidermal induction and inhibition of neural fate by translation initiation factor 4AIII.</title>
        <authorList>
            <person name="Weinstein D.C."/>
            <person name="Honore E."/>
            <person name="Hemmati-Brivanlou A."/>
        </authorList>
    </citation>
    <scope>NUCLEOTIDE SEQUENCE [MRNA]</scope>
    <scope>FUNCTION</scope>
    <scope>DEVELOPMENTAL STAGE</scope>
    <source>
        <tissue>Blastula</tissue>
    </source>
</reference>
<gene>
    <name type="primary">eif4a3-b</name>
    <name type="synonym">ddx48</name>
</gene>
<feature type="chain" id="PRO_0000378561" description="Eukaryotic initiation factor 4A-III-B">
    <location>
        <begin position="1"/>
        <end position="414"/>
    </location>
</feature>
<feature type="domain" description="Helicase ATP-binding" evidence="3">
    <location>
        <begin position="72"/>
        <end position="242"/>
    </location>
</feature>
<feature type="domain" description="Helicase C-terminal" evidence="4">
    <location>
        <begin position="253"/>
        <end position="414"/>
    </location>
</feature>
<feature type="short sequence motif" description="Q motif">
    <location>
        <begin position="41"/>
        <end position="69"/>
    </location>
</feature>
<feature type="short sequence motif" description="DEAD box" evidence="6">
    <location>
        <begin position="190"/>
        <end position="193"/>
    </location>
</feature>
<feature type="binding site" evidence="1">
    <location>
        <position position="63"/>
    </location>
    <ligand>
        <name>ATP</name>
        <dbReference type="ChEBI" id="CHEBI:30616"/>
    </ligand>
</feature>
<feature type="binding site" evidence="1">
    <location>
        <position position="68"/>
    </location>
    <ligand>
        <name>ATP</name>
        <dbReference type="ChEBI" id="CHEBI:30616"/>
    </ligand>
</feature>
<feature type="binding site" evidence="3">
    <location>
        <begin position="85"/>
        <end position="92"/>
    </location>
    <ligand>
        <name>ATP</name>
        <dbReference type="ChEBI" id="CHEBI:30616"/>
    </ligand>
</feature>
<feature type="binding site" evidence="1">
    <location>
        <begin position="88"/>
        <end position="93"/>
    </location>
    <ligand>
        <name>ATP</name>
        <dbReference type="ChEBI" id="CHEBI:30616"/>
    </ligand>
</feature>
<feature type="binding site" evidence="1">
    <location>
        <position position="345"/>
    </location>
    <ligand>
        <name>ATP</name>
        <dbReference type="ChEBI" id="CHEBI:30616"/>
    </ligand>
</feature>
<feature type="binding site" evidence="1">
    <location>
        <begin position="370"/>
        <end position="374"/>
    </location>
    <ligand>
        <name>ATP</name>
        <dbReference type="ChEBI" id="CHEBI:30616"/>
    </ligand>
</feature>
<organism>
    <name type="scientific">Xenopus laevis</name>
    <name type="common">African clawed frog</name>
    <dbReference type="NCBI Taxonomy" id="8355"/>
    <lineage>
        <taxon>Eukaryota</taxon>
        <taxon>Metazoa</taxon>
        <taxon>Chordata</taxon>
        <taxon>Craniata</taxon>
        <taxon>Vertebrata</taxon>
        <taxon>Euteleostomi</taxon>
        <taxon>Amphibia</taxon>
        <taxon>Batrachia</taxon>
        <taxon>Anura</taxon>
        <taxon>Pipoidea</taxon>
        <taxon>Pipidae</taxon>
        <taxon>Xenopodinae</taxon>
        <taxon>Xenopus</taxon>
        <taxon>Xenopus</taxon>
    </lineage>
</organism>